<sequence>MAFKDTFNKMISYFDTDEVNEVEEDVAASTDNVIPRSQQSVRASSHPKQEPRNNHVQQDHQARSQEQTRSQMHPKHGTSERYYQQSQPKEGHEMVDRRKRMSTSGIANRREQYQQSTCSDQTTIALKYPRKYEDAQEIVDLLIVNECVLIDFQFMLDAQARRCLDFIDGASKVLYGSLQKVGSSMYLLAPSNVSVNIEEMTIPHTTQDIGFDFDMKRR</sequence>
<feature type="chain" id="PRO_0000334100" description="Cell division protein SepF">
    <location>
        <begin position="1"/>
        <end position="218"/>
    </location>
</feature>
<feature type="region of interest" description="Disordered" evidence="2">
    <location>
        <begin position="25"/>
        <end position="115"/>
    </location>
</feature>
<feature type="compositionally biased region" description="Polar residues" evidence="2">
    <location>
        <begin position="29"/>
        <end position="43"/>
    </location>
</feature>
<feature type="compositionally biased region" description="Basic and acidic residues" evidence="2">
    <location>
        <begin position="47"/>
        <end position="63"/>
    </location>
</feature>
<proteinExistence type="inferred from homology"/>
<dbReference type="EMBL" id="CP000261">
    <property type="protein sequence ID" value="ABF36317.1"/>
    <property type="status" value="ALT_INIT"/>
    <property type="molecule type" value="Genomic_DNA"/>
</dbReference>
<dbReference type="SMR" id="Q1JAU1"/>
<dbReference type="KEGG" id="spj:MGAS2096_Spy1265"/>
<dbReference type="HOGENOM" id="CLU_078499_2_0_9"/>
<dbReference type="GO" id="GO:0005737">
    <property type="term" value="C:cytoplasm"/>
    <property type="evidence" value="ECO:0007669"/>
    <property type="project" value="UniProtKB-SubCell"/>
</dbReference>
<dbReference type="GO" id="GO:0000917">
    <property type="term" value="P:division septum assembly"/>
    <property type="evidence" value="ECO:0007669"/>
    <property type="project" value="UniProtKB-KW"/>
</dbReference>
<dbReference type="GO" id="GO:0043093">
    <property type="term" value="P:FtsZ-dependent cytokinesis"/>
    <property type="evidence" value="ECO:0007669"/>
    <property type="project" value="UniProtKB-UniRule"/>
</dbReference>
<dbReference type="Gene3D" id="3.30.110.150">
    <property type="entry name" value="SepF-like protein"/>
    <property type="match status" value="1"/>
</dbReference>
<dbReference type="HAMAP" id="MF_01197">
    <property type="entry name" value="SepF"/>
    <property type="match status" value="1"/>
</dbReference>
<dbReference type="InterPro" id="IPR023052">
    <property type="entry name" value="Cell_div_SepF"/>
</dbReference>
<dbReference type="InterPro" id="IPR007561">
    <property type="entry name" value="Cell_div_SepF/SepF-rel"/>
</dbReference>
<dbReference type="InterPro" id="IPR038594">
    <property type="entry name" value="SepF-like_sf"/>
</dbReference>
<dbReference type="PANTHER" id="PTHR35798">
    <property type="entry name" value="CELL DIVISION PROTEIN SEPF"/>
    <property type="match status" value="1"/>
</dbReference>
<dbReference type="PANTHER" id="PTHR35798:SF1">
    <property type="entry name" value="CELL DIVISION PROTEIN SEPF"/>
    <property type="match status" value="1"/>
</dbReference>
<dbReference type="Pfam" id="PF04472">
    <property type="entry name" value="SepF"/>
    <property type="match status" value="1"/>
</dbReference>
<accession>Q1JAU1</accession>
<keyword id="KW-0131">Cell cycle</keyword>
<keyword id="KW-0132">Cell division</keyword>
<keyword id="KW-0963">Cytoplasm</keyword>
<keyword id="KW-0717">Septation</keyword>
<name>SEPF_STRPB</name>
<comment type="function">
    <text evidence="1">Cell division protein that is part of the divisome complex and is recruited early to the Z-ring. Probably stimulates Z-ring formation, perhaps through the cross-linking of FtsZ protofilaments. Its function overlaps with FtsA.</text>
</comment>
<comment type="subunit">
    <text evidence="1">Homodimer. Interacts with FtsZ.</text>
</comment>
<comment type="subcellular location">
    <subcellularLocation>
        <location evidence="1">Cytoplasm</location>
    </subcellularLocation>
    <text evidence="1">Localizes to the division site, in a FtsZ-dependent manner.</text>
</comment>
<comment type="similarity">
    <text evidence="1">Belongs to the SepF family.</text>
</comment>
<comment type="sequence caution" evidence="3">
    <conflict type="erroneous initiation">
        <sequence resource="EMBL-CDS" id="ABF36317"/>
    </conflict>
</comment>
<protein>
    <recommendedName>
        <fullName evidence="1">Cell division protein SepF</fullName>
    </recommendedName>
</protein>
<gene>
    <name evidence="1" type="primary">sepF</name>
    <name type="ordered locus">MGAS2096_Spy1265</name>
</gene>
<evidence type="ECO:0000255" key="1">
    <source>
        <dbReference type="HAMAP-Rule" id="MF_01197"/>
    </source>
</evidence>
<evidence type="ECO:0000256" key="2">
    <source>
        <dbReference type="SAM" id="MobiDB-lite"/>
    </source>
</evidence>
<evidence type="ECO:0000305" key="3"/>
<organism>
    <name type="scientific">Streptococcus pyogenes serotype M12 (strain MGAS2096)</name>
    <dbReference type="NCBI Taxonomy" id="370553"/>
    <lineage>
        <taxon>Bacteria</taxon>
        <taxon>Bacillati</taxon>
        <taxon>Bacillota</taxon>
        <taxon>Bacilli</taxon>
        <taxon>Lactobacillales</taxon>
        <taxon>Streptococcaceae</taxon>
        <taxon>Streptococcus</taxon>
    </lineage>
</organism>
<reference key="1">
    <citation type="journal article" date="2006" name="Proc. Natl. Acad. Sci. U.S.A.">
        <title>Molecular genetic anatomy of inter- and intraserotype variation in the human bacterial pathogen group A Streptococcus.</title>
        <authorList>
            <person name="Beres S.B."/>
            <person name="Richter E.W."/>
            <person name="Nagiec M.J."/>
            <person name="Sumby P."/>
            <person name="Porcella S.F."/>
            <person name="DeLeo F.R."/>
            <person name="Musser J.M."/>
        </authorList>
    </citation>
    <scope>NUCLEOTIDE SEQUENCE [LARGE SCALE GENOMIC DNA]</scope>
    <source>
        <strain>MGAS2096</strain>
    </source>
</reference>